<dbReference type="EC" id="2.4.2.29" evidence="1"/>
<dbReference type="EMBL" id="CP000720">
    <property type="protein sequence ID" value="ABS47602.1"/>
    <property type="molecule type" value="Genomic_DNA"/>
</dbReference>
<dbReference type="RefSeq" id="WP_002208672.1">
    <property type="nucleotide sequence ID" value="NC_009708.1"/>
</dbReference>
<dbReference type="SMR" id="A7FLF5"/>
<dbReference type="GeneID" id="57975522"/>
<dbReference type="KEGG" id="ypi:YpsIP31758_3123"/>
<dbReference type="HOGENOM" id="CLU_022060_0_1_6"/>
<dbReference type="UniPathway" id="UPA00392"/>
<dbReference type="Proteomes" id="UP000002412">
    <property type="component" value="Chromosome"/>
</dbReference>
<dbReference type="GO" id="GO:0005829">
    <property type="term" value="C:cytosol"/>
    <property type="evidence" value="ECO:0007669"/>
    <property type="project" value="TreeGrafter"/>
</dbReference>
<dbReference type="GO" id="GO:0046872">
    <property type="term" value="F:metal ion binding"/>
    <property type="evidence" value="ECO:0007669"/>
    <property type="project" value="UniProtKB-KW"/>
</dbReference>
<dbReference type="GO" id="GO:0008479">
    <property type="term" value="F:tRNA-guanosine(34) queuine transglycosylase activity"/>
    <property type="evidence" value="ECO:0007669"/>
    <property type="project" value="UniProtKB-UniRule"/>
</dbReference>
<dbReference type="GO" id="GO:0008616">
    <property type="term" value="P:queuosine biosynthetic process"/>
    <property type="evidence" value="ECO:0007669"/>
    <property type="project" value="UniProtKB-UniRule"/>
</dbReference>
<dbReference type="GO" id="GO:0002099">
    <property type="term" value="P:tRNA wobble guanine modification"/>
    <property type="evidence" value="ECO:0007669"/>
    <property type="project" value="TreeGrafter"/>
</dbReference>
<dbReference type="GO" id="GO:0101030">
    <property type="term" value="P:tRNA-guanine transglycosylation"/>
    <property type="evidence" value="ECO:0007669"/>
    <property type="project" value="InterPro"/>
</dbReference>
<dbReference type="FunFam" id="3.20.20.105:FF:000001">
    <property type="entry name" value="Queuine tRNA-ribosyltransferase"/>
    <property type="match status" value="1"/>
</dbReference>
<dbReference type="Gene3D" id="3.20.20.105">
    <property type="entry name" value="Queuine tRNA-ribosyltransferase-like"/>
    <property type="match status" value="1"/>
</dbReference>
<dbReference type="HAMAP" id="MF_00168">
    <property type="entry name" value="Q_tRNA_Tgt"/>
    <property type="match status" value="1"/>
</dbReference>
<dbReference type="InterPro" id="IPR050076">
    <property type="entry name" value="ArchSynthase1/Queuine_TRR"/>
</dbReference>
<dbReference type="InterPro" id="IPR004803">
    <property type="entry name" value="TGT"/>
</dbReference>
<dbReference type="InterPro" id="IPR036511">
    <property type="entry name" value="TGT-like_sf"/>
</dbReference>
<dbReference type="InterPro" id="IPR002616">
    <property type="entry name" value="tRNA_ribo_trans-like"/>
</dbReference>
<dbReference type="NCBIfam" id="TIGR00430">
    <property type="entry name" value="Q_tRNA_tgt"/>
    <property type="match status" value="1"/>
</dbReference>
<dbReference type="NCBIfam" id="TIGR00449">
    <property type="entry name" value="tgt_general"/>
    <property type="match status" value="1"/>
</dbReference>
<dbReference type="PANTHER" id="PTHR46499">
    <property type="entry name" value="QUEUINE TRNA-RIBOSYLTRANSFERASE"/>
    <property type="match status" value="1"/>
</dbReference>
<dbReference type="PANTHER" id="PTHR46499:SF1">
    <property type="entry name" value="QUEUINE TRNA-RIBOSYLTRANSFERASE"/>
    <property type="match status" value="1"/>
</dbReference>
<dbReference type="Pfam" id="PF01702">
    <property type="entry name" value="TGT"/>
    <property type="match status" value="1"/>
</dbReference>
<dbReference type="SUPFAM" id="SSF51713">
    <property type="entry name" value="tRNA-guanine transglycosylase"/>
    <property type="match status" value="1"/>
</dbReference>
<protein>
    <recommendedName>
        <fullName evidence="1">Queuine tRNA-ribosyltransferase</fullName>
        <ecNumber evidence="1">2.4.2.29</ecNumber>
    </recommendedName>
    <alternativeName>
        <fullName evidence="1">Guanine insertion enzyme</fullName>
    </alternativeName>
    <alternativeName>
        <fullName evidence="1">tRNA-guanine transglycosylase</fullName>
    </alternativeName>
</protein>
<evidence type="ECO:0000255" key="1">
    <source>
        <dbReference type="HAMAP-Rule" id="MF_00168"/>
    </source>
</evidence>
<reference key="1">
    <citation type="journal article" date="2007" name="PLoS Genet.">
        <title>The complete genome sequence of Yersinia pseudotuberculosis IP31758, the causative agent of Far East scarlet-like fever.</title>
        <authorList>
            <person name="Eppinger M."/>
            <person name="Rosovitz M.J."/>
            <person name="Fricke W.F."/>
            <person name="Rasko D.A."/>
            <person name="Kokorina G."/>
            <person name="Fayolle C."/>
            <person name="Lindler L.E."/>
            <person name="Carniel E."/>
            <person name="Ravel J."/>
        </authorList>
    </citation>
    <scope>NUCLEOTIDE SEQUENCE [LARGE SCALE GENOMIC DNA]</scope>
    <source>
        <strain>IP 31758</strain>
    </source>
</reference>
<sequence length="374" mass="42633">MKYELQKTDGRARRGRLVFERGVVETPAFMPVGTYGTVKGMTPEEVKETGAQILLGNTFHLWLRPGQEIMKLHGDLHDFMQWHGPILTDSGGFQVFSLGAMRKIKEEGVHFKNPINGDSVFLSPEKSMEIQYDLGSDIVMIFDECTPYPADWDYAKRSMEMSLRWAARSRQRFDELNNKNALFGIIQGGVYEDLRDVSVKGLVDIGFDGYAVGGLAVGEPKEDMHRILEHVCPQIPEDKPRYLMGVGKPEDLVEGVRRGIDMFDCVMPTRNARNGHLFVTDGVVKIRNAKHKDDTATLDEHCDCYTCRHYSRAYLHHLDRCNEILGARLNTIHNLRYYQRLMAGLRQAIEEGKLEHFVEDFYGRIGKPVPPLNV</sequence>
<organism>
    <name type="scientific">Yersinia pseudotuberculosis serotype O:1b (strain IP 31758)</name>
    <dbReference type="NCBI Taxonomy" id="349747"/>
    <lineage>
        <taxon>Bacteria</taxon>
        <taxon>Pseudomonadati</taxon>
        <taxon>Pseudomonadota</taxon>
        <taxon>Gammaproteobacteria</taxon>
        <taxon>Enterobacterales</taxon>
        <taxon>Yersiniaceae</taxon>
        <taxon>Yersinia</taxon>
    </lineage>
</organism>
<accession>A7FLF5</accession>
<feature type="chain" id="PRO_1000058291" description="Queuine tRNA-ribosyltransferase">
    <location>
        <begin position="1"/>
        <end position="374"/>
    </location>
</feature>
<feature type="region of interest" description="RNA binding" evidence="1">
    <location>
        <begin position="245"/>
        <end position="251"/>
    </location>
</feature>
<feature type="region of interest" description="RNA binding; important for wobble base 34 recognition" evidence="1">
    <location>
        <begin position="269"/>
        <end position="273"/>
    </location>
</feature>
<feature type="active site" description="Proton acceptor" evidence="1">
    <location>
        <position position="89"/>
    </location>
</feature>
<feature type="active site" description="Nucleophile" evidence="1">
    <location>
        <position position="264"/>
    </location>
</feature>
<feature type="binding site" evidence="1">
    <location>
        <begin position="89"/>
        <end position="93"/>
    </location>
    <ligand>
        <name>substrate</name>
    </ligand>
</feature>
<feature type="binding site" evidence="1">
    <location>
        <position position="143"/>
    </location>
    <ligand>
        <name>substrate</name>
    </ligand>
</feature>
<feature type="binding site" evidence="1">
    <location>
        <position position="187"/>
    </location>
    <ligand>
        <name>substrate</name>
    </ligand>
</feature>
<feature type="binding site" evidence="1">
    <location>
        <position position="214"/>
    </location>
    <ligand>
        <name>substrate</name>
    </ligand>
</feature>
<feature type="binding site" evidence="1">
    <location>
        <position position="302"/>
    </location>
    <ligand>
        <name>Zn(2+)</name>
        <dbReference type="ChEBI" id="CHEBI:29105"/>
    </ligand>
</feature>
<feature type="binding site" evidence="1">
    <location>
        <position position="304"/>
    </location>
    <ligand>
        <name>Zn(2+)</name>
        <dbReference type="ChEBI" id="CHEBI:29105"/>
    </ligand>
</feature>
<feature type="binding site" evidence="1">
    <location>
        <position position="307"/>
    </location>
    <ligand>
        <name>Zn(2+)</name>
        <dbReference type="ChEBI" id="CHEBI:29105"/>
    </ligand>
</feature>
<feature type="binding site" evidence="1">
    <location>
        <position position="333"/>
    </location>
    <ligand>
        <name>Zn(2+)</name>
        <dbReference type="ChEBI" id="CHEBI:29105"/>
    </ligand>
</feature>
<proteinExistence type="inferred from homology"/>
<keyword id="KW-0328">Glycosyltransferase</keyword>
<keyword id="KW-0479">Metal-binding</keyword>
<keyword id="KW-0671">Queuosine biosynthesis</keyword>
<keyword id="KW-0808">Transferase</keyword>
<keyword id="KW-0819">tRNA processing</keyword>
<keyword id="KW-0862">Zinc</keyword>
<gene>
    <name evidence="1" type="primary">tgt</name>
    <name type="ordered locus">YpsIP31758_3123</name>
</gene>
<comment type="function">
    <text evidence="1">Catalyzes the base-exchange of a guanine (G) residue with the queuine precursor 7-aminomethyl-7-deazaguanine (PreQ1) at position 34 (anticodon wobble position) in tRNAs with GU(N) anticodons (tRNA-Asp, -Asn, -His and -Tyr). Catalysis occurs through a double-displacement mechanism. The nucleophile active site attacks the C1' of nucleotide 34 to detach the guanine base from the RNA, forming a covalent enzyme-RNA intermediate. The proton acceptor active site deprotonates the incoming PreQ1, allowing a nucleophilic attack on the C1' of the ribose to form the product. After dissociation, two additional enzymatic reactions on the tRNA convert PreQ1 to queuine (Q), resulting in the hypermodified nucleoside queuosine (7-(((4,5-cis-dihydroxy-2-cyclopenten-1-yl)amino)methyl)-7-deazaguanosine).</text>
</comment>
<comment type="catalytic activity">
    <reaction evidence="1">
        <text>7-aminomethyl-7-carbaguanine + guanosine(34) in tRNA = 7-aminomethyl-7-carbaguanosine(34) in tRNA + guanine</text>
        <dbReference type="Rhea" id="RHEA:24104"/>
        <dbReference type="Rhea" id="RHEA-COMP:10341"/>
        <dbReference type="Rhea" id="RHEA-COMP:10342"/>
        <dbReference type="ChEBI" id="CHEBI:16235"/>
        <dbReference type="ChEBI" id="CHEBI:58703"/>
        <dbReference type="ChEBI" id="CHEBI:74269"/>
        <dbReference type="ChEBI" id="CHEBI:82833"/>
        <dbReference type="EC" id="2.4.2.29"/>
    </reaction>
</comment>
<comment type="cofactor">
    <cofactor evidence="1">
        <name>Zn(2+)</name>
        <dbReference type="ChEBI" id="CHEBI:29105"/>
    </cofactor>
    <text evidence="1">Binds 1 zinc ion per subunit.</text>
</comment>
<comment type="pathway">
    <text evidence="1">tRNA modification; tRNA-queuosine biosynthesis.</text>
</comment>
<comment type="subunit">
    <text evidence="1">Homodimer. Within each dimer, one monomer is responsible for RNA recognition and catalysis, while the other monomer binds to the replacement base PreQ1.</text>
</comment>
<comment type="similarity">
    <text evidence="1">Belongs to the queuine tRNA-ribosyltransferase family.</text>
</comment>
<name>TGT_YERP3</name>